<keyword id="KW-0479">Metal-binding</keyword>
<keyword id="KW-0533">Nickel</keyword>
<keyword id="KW-0560">Oxidoreductase</keyword>
<keyword id="KW-1185">Reference proteome</keyword>
<keyword id="KW-0712">Selenocysteine</keyword>
<dbReference type="EC" id="1.12.99.-"/>
<dbReference type="EMBL" id="L77117">
    <property type="protein sequence ID" value="AAB99197.1"/>
    <property type="status" value="ALT_SEQ"/>
    <property type="molecule type" value="Genomic_DNA"/>
</dbReference>
<dbReference type="RefSeq" id="WP_012980417.1">
    <property type="nucleotide sequence ID" value="NC_000909.1"/>
</dbReference>
<dbReference type="FunCoup" id="P81335">
    <property type="interactions" value="91"/>
</dbReference>
<dbReference type="STRING" id="243232.MJ_1192.1"/>
<dbReference type="PaxDb" id="243232-MJ_1192.1"/>
<dbReference type="EnsemblBacteria" id="AAB99197">
    <property type="protein sequence ID" value="AAB99197"/>
    <property type="gene ID" value="MJ_1192.1"/>
</dbReference>
<dbReference type="GeneID" id="8804665"/>
<dbReference type="KEGG" id="mja:MJ_1192.1"/>
<dbReference type="HOGENOM" id="CLU_3387472_0_0_2"/>
<dbReference type="InParanoid" id="P81335"/>
<dbReference type="OrthoDB" id="42371at2157"/>
<dbReference type="Proteomes" id="UP000000805">
    <property type="component" value="Chromosome"/>
</dbReference>
<dbReference type="GO" id="GO:0046872">
    <property type="term" value="F:metal ion binding"/>
    <property type="evidence" value="ECO:0007669"/>
    <property type="project" value="UniProtKB-KW"/>
</dbReference>
<dbReference type="GO" id="GO:0016491">
    <property type="term" value="F:oxidoreductase activity"/>
    <property type="evidence" value="ECO:0007669"/>
    <property type="project" value="UniProtKB-KW"/>
</dbReference>
<dbReference type="Gene3D" id="1.10.645.10">
    <property type="entry name" value="Cytochrome-c3 Hydrogenase, chain B"/>
    <property type="match status" value="1"/>
</dbReference>
<dbReference type="InterPro" id="IPR053438">
    <property type="entry name" value="F420-Hydrogenase_large-U"/>
</dbReference>
<dbReference type="InterPro" id="IPR029014">
    <property type="entry name" value="NiFe-Hase_large"/>
</dbReference>
<dbReference type="NCBIfam" id="NF041786">
    <property type="entry name" value="VhuU"/>
    <property type="match status" value="1"/>
</dbReference>
<dbReference type="SUPFAM" id="SSF56762">
    <property type="entry name" value="HydB/Nqo4-like"/>
    <property type="match status" value="1"/>
</dbReference>
<name>VHUU_METJA</name>
<sequence>MAEKSTVKVDEVKLNLIEMVLRAYDPUYSCAAHIIVKDEKGNKIIEVIKE</sequence>
<reference key="1">
    <citation type="journal article" date="1996" name="Science">
        <title>Complete genome sequence of the methanogenic archaeon, Methanococcus jannaschii.</title>
        <authorList>
            <person name="Bult C.J."/>
            <person name="White O."/>
            <person name="Olsen G.J."/>
            <person name="Zhou L."/>
            <person name="Fleischmann R.D."/>
            <person name="Sutton G.G."/>
            <person name="Blake J.A."/>
            <person name="FitzGerald L.M."/>
            <person name="Clayton R.A."/>
            <person name="Gocayne J.D."/>
            <person name="Kerlavage A.R."/>
            <person name="Dougherty B.A."/>
            <person name="Tomb J.-F."/>
            <person name="Adams M.D."/>
            <person name="Reich C.I."/>
            <person name="Overbeek R."/>
            <person name="Kirkness E.F."/>
            <person name="Weinstock K.G."/>
            <person name="Merrick J.M."/>
            <person name="Glodek A."/>
            <person name="Scott J.L."/>
            <person name="Geoghagen N.S.M."/>
            <person name="Weidman J.F."/>
            <person name="Fuhrmann J.L."/>
            <person name="Nguyen D."/>
            <person name="Utterback T.R."/>
            <person name="Kelley J.M."/>
            <person name="Peterson J.D."/>
            <person name="Sadow P.W."/>
            <person name="Hanna M.C."/>
            <person name="Cotton M.D."/>
            <person name="Roberts K.M."/>
            <person name="Hurst M.A."/>
            <person name="Kaine B.P."/>
            <person name="Borodovsky M."/>
            <person name="Klenk H.-P."/>
            <person name="Fraser C.M."/>
            <person name="Smith H.O."/>
            <person name="Woese C.R."/>
            <person name="Venter J.C."/>
        </authorList>
    </citation>
    <scope>NUCLEOTIDE SEQUENCE [LARGE SCALE GENOMIC DNA]</scope>
    <source>
        <strain>ATCC 43067 / DSM 2661 / JAL-1 / JCM 10045 / NBRC 100440</strain>
    </source>
</reference>
<reference key="2">
    <citation type="journal article" date="1997" name="J. Mol. Biol.">
        <title>Selenoprotein synthesis in archaea: identification of an mRNA element of Methanococcus jannaschii probably directing selenocysteine insertion.</title>
        <authorList>
            <person name="Wilting R."/>
            <person name="Schorling S."/>
            <person name="Persson B.C."/>
            <person name="Boeck A."/>
        </authorList>
    </citation>
    <scope>PROBABLE SELENOCYSTEINE AT SEC-27</scope>
</reference>
<feature type="chain" id="PRO_0000013409" description="F420-non-reducing hydrogenase vhu subunit U">
    <location>
        <begin position="1"/>
        <end position="33"/>
    </location>
</feature>
<feature type="propeptide" id="PRO_0000013410" description="Removed in mature form" evidence="1">
    <location>
        <begin position="34"/>
        <end position="50"/>
    </location>
</feature>
<feature type="binding site" evidence="2">
    <location>
        <position position="27"/>
    </location>
    <ligand>
        <name>Ni(2+)</name>
        <dbReference type="ChEBI" id="CHEBI:49786"/>
    </ligand>
</feature>
<feature type="binding site" evidence="2">
    <location>
        <position position="30"/>
    </location>
    <ligand>
        <name>Ni(2+)</name>
        <dbReference type="ChEBI" id="CHEBI:49786"/>
    </ligand>
</feature>
<feature type="non-standard amino acid" description="Selenocysteine" evidence="3">
    <location>
        <position position="27"/>
    </location>
</feature>
<gene>
    <name type="primary">vhuU</name>
    <name type="ordered locus">MJ1192.1</name>
</gene>
<proteinExistence type="inferred from homology"/>
<evidence type="ECO:0000250" key="1"/>
<evidence type="ECO:0000255" key="2"/>
<evidence type="ECO:0000305" key="3"/>
<protein>
    <recommendedName>
        <fullName>F420-non-reducing hydrogenase vhu subunit U</fullName>
        <ecNumber>1.12.99.-</ecNumber>
    </recommendedName>
</protein>
<accession>P81335</accession>
<comment type="cofactor">
    <cofactor evidence="3">
        <name>Ni(2+)</name>
        <dbReference type="ChEBI" id="CHEBI:49786"/>
    </cofactor>
</comment>
<comment type="subunit">
    <text evidence="1">The F420-non-reducing hydrogenase vhu is composed of four subunits; VhuA, VhuD, VhuG and VhuU.</text>
</comment>
<comment type="miscellaneous">
    <text>The large subunit of Vhu is split into VhuA and VhuU. Each contributes two ligands to the [NiFeSe] center.</text>
</comment>
<comment type="similarity">
    <text evidence="3">Belongs to the [NiFe]/[NiFeSe] hydrogenase large subunit family.</text>
</comment>
<comment type="sequence caution" evidence="3">
    <conflict type="erroneous termination">
        <sequence resource="EMBL-CDS" id="AAB99197"/>
    </conflict>
    <text>Truncated C-terminus.</text>
</comment>
<organism>
    <name type="scientific">Methanocaldococcus jannaschii (strain ATCC 43067 / DSM 2661 / JAL-1 / JCM 10045 / NBRC 100440)</name>
    <name type="common">Methanococcus jannaschii</name>
    <dbReference type="NCBI Taxonomy" id="243232"/>
    <lineage>
        <taxon>Archaea</taxon>
        <taxon>Methanobacteriati</taxon>
        <taxon>Methanobacteriota</taxon>
        <taxon>Methanomada group</taxon>
        <taxon>Methanococci</taxon>
        <taxon>Methanococcales</taxon>
        <taxon>Methanocaldococcaceae</taxon>
        <taxon>Methanocaldococcus</taxon>
    </lineage>
</organism>